<feature type="chain" id="PRO_0000228267" description="Probable translation initiation factor IF-2">
    <location>
        <begin position="1"/>
        <end position="602"/>
    </location>
</feature>
<feature type="domain" description="tr-type G">
    <location>
        <begin position="15"/>
        <end position="230"/>
    </location>
</feature>
<feature type="region of interest" description="G1" evidence="1">
    <location>
        <begin position="24"/>
        <end position="31"/>
    </location>
</feature>
<feature type="region of interest" description="G2" evidence="1">
    <location>
        <begin position="49"/>
        <end position="53"/>
    </location>
</feature>
<feature type="region of interest" description="G3" evidence="1">
    <location>
        <begin position="86"/>
        <end position="89"/>
    </location>
</feature>
<feature type="region of interest" description="G4" evidence="1">
    <location>
        <begin position="140"/>
        <end position="143"/>
    </location>
</feature>
<feature type="region of interest" description="G5" evidence="1">
    <location>
        <begin position="208"/>
        <end position="210"/>
    </location>
</feature>
<feature type="binding site" evidence="2">
    <location>
        <begin position="24"/>
        <end position="31"/>
    </location>
    <ligand>
        <name>GTP</name>
        <dbReference type="ChEBI" id="CHEBI:37565"/>
    </ligand>
</feature>
<feature type="binding site" evidence="2">
    <location>
        <begin position="86"/>
        <end position="90"/>
    </location>
    <ligand>
        <name>GTP</name>
        <dbReference type="ChEBI" id="CHEBI:37565"/>
    </ligand>
</feature>
<feature type="binding site" evidence="2">
    <location>
        <begin position="140"/>
        <end position="143"/>
    </location>
    <ligand>
        <name>GTP</name>
        <dbReference type="ChEBI" id="CHEBI:37565"/>
    </ligand>
</feature>
<gene>
    <name evidence="2" type="primary">infB</name>
    <name type="ordered locus">NP_4982A</name>
</gene>
<organism>
    <name type="scientific">Natronomonas pharaonis (strain ATCC 35678 / DSM 2160 / CIP 103997 / JCM 8858 / NBRC 14720 / NCIMB 2260 / Gabara)</name>
    <name type="common">Halobacterium pharaonis</name>
    <dbReference type="NCBI Taxonomy" id="348780"/>
    <lineage>
        <taxon>Archaea</taxon>
        <taxon>Methanobacteriati</taxon>
        <taxon>Methanobacteriota</taxon>
        <taxon>Stenosarchaea group</taxon>
        <taxon>Halobacteria</taxon>
        <taxon>Halobacteriales</taxon>
        <taxon>Haloarculaceae</taxon>
        <taxon>Natronomonas</taxon>
    </lineage>
</organism>
<accession>Q3IMS5</accession>
<sequence length="602" mass="65542">MSESDTTDAGDGTALRTPIVAVLGHVDHGKTSLLDEVRGSAVTAGEAGAITQHIGATAVPLDTISELAGQLVSPEDFDLPGLLFIDTPGHHSFSTLRSRGGALADIAILVVDVNDGFQPQSYEALDILKRTQTPFIVAANKIDTVPGWNPNPDEPVQRTLEAQSDRAESRLNEQLYEIIGELSDEGFSADMYWRVQNFRENIGVVPVSAETGEGVPDLLTVLMGLSQRYLKEEMSIDVGGPGVGTVLEVKEERGFGTTLDIVLYDGTIRADDTIVVGGKNETIVTDVRALLQPQPLAEIRTEKQFEQVEAVGAAAGIKIAAPDLDDAMAGAPVRVVRDRPVEEVIAEVEAELADIQVVTEEEGIVVKADTLGSLEAIAAALEEAEIPIVRAEVGDVAPRDIAVASTAEEPKHEAVLAFNVDVLDDAEREAEEKDVKLFADDVIYQLVEEYDDYVTEIEEAQQEQILDKIERPCRFRVLKDHVFRQSNPAVVGVEVLSGTLKRNSRVVKWDGNEPERVGELKSLQDAGDDIDEARTGEQVAASIDGPTVGRQIEEGDELWAEVPEKHAKILEQELADEIPTDELEALRMYLDKQRKRDPFWGK</sequence>
<name>IF2P_NATPD</name>
<proteinExistence type="inferred from homology"/>
<reference key="1">
    <citation type="journal article" date="2005" name="Genome Res.">
        <title>Living with two extremes: conclusions from the genome sequence of Natronomonas pharaonis.</title>
        <authorList>
            <person name="Falb M."/>
            <person name="Pfeiffer F."/>
            <person name="Palm P."/>
            <person name="Rodewald K."/>
            <person name="Hickmann V."/>
            <person name="Tittor J."/>
            <person name="Oesterhelt D."/>
        </authorList>
    </citation>
    <scope>NUCLEOTIDE SEQUENCE [LARGE SCALE GENOMIC DNA]</scope>
    <source>
        <strain>ATCC 35678 / DSM 2160 / CIP 103997 / JCM 8858 / NBRC 14720 / NCIMB 2260 / Gabara</strain>
    </source>
</reference>
<protein>
    <recommendedName>
        <fullName evidence="2">Probable translation initiation factor IF-2</fullName>
    </recommendedName>
</protein>
<dbReference type="EMBL" id="CR936257">
    <property type="protein sequence ID" value="CAI50582.1"/>
    <property type="molecule type" value="Genomic_DNA"/>
</dbReference>
<dbReference type="RefSeq" id="WP_011324193.1">
    <property type="nucleotide sequence ID" value="NC_007426.1"/>
</dbReference>
<dbReference type="SMR" id="Q3IMS5"/>
<dbReference type="STRING" id="348780.NP_4982A"/>
<dbReference type="EnsemblBacteria" id="CAI50582">
    <property type="protein sequence ID" value="CAI50582"/>
    <property type="gene ID" value="NP_4982A"/>
</dbReference>
<dbReference type="GeneID" id="3703271"/>
<dbReference type="KEGG" id="nph:NP_4982A"/>
<dbReference type="eggNOG" id="arCOG01560">
    <property type="taxonomic scope" value="Archaea"/>
</dbReference>
<dbReference type="HOGENOM" id="CLU_002656_3_3_2"/>
<dbReference type="OrthoDB" id="30957at2157"/>
<dbReference type="Proteomes" id="UP000002698">
    <property type="component" value="Chromosome"/>
</dbReference>
<dbReference type="GO" id="GO:0005737">
    <property type="term" value="C:cytoplasm"/>
    <property type="evidence" value="ECO:0007669"/>
    <property type="project" value="TreeGrafter"/>
</dbReference>
<dbReference type="GO" id="GO:0005525">
    <property type="term" value="F:GTP binding"/>
    <property type="evidence" value="ECO:0007669"/>
    <property type="project" value="UniProtKB-KW"/>
</dbReference>
<dbReference type="GO" id="GO:0003924">
    <property type="term" value="F:GTPase activity"/>
    <property type="evidence" value="ECO:0007669"/>
    <property type="project" value="UniProtKB-UniRule"/>
</dbReference>
<dbReference type="GO" id="GO:0003743">
    <property type="term" value="F:translation initiation factor activity"/>
    <property type="evidence" value="ECO:0007669"/>
    <property type="project" value="UniProtKB-UniRule"/>
</dbReference>
<dbReference type="CDD" id="cd03703">
    <property type="entry name" value="aeIF5B_II"/>
    <property type="match status" value="1"/>
</dbReference>
<dbReference type="CDD" id="cd16266">
    <property type="entry name" value="IF2_aeIF5B_IV"/>
    <property type="match status" value="1"/>
</dbReference>
<dbReference type="CDD" id="cd01887">
    <property type="entry name" value="IF2_eIF5B"/>
    <property type="match status" value="1"/>
</dbReference>
<dbReference type="FunFam" id="3.40.50.300:FF:000112">
    <property type="entry name" value="Eukaryotic translation initiation factor 5B"/>
    <property type="match status" value="1"/>
</dbReference>
<dbReference type="FunFam" id="2.40.30.10:FF:000013">
    <property type="entry name" value="eukaryotic translation initiation factor 5B"/>
    <property type="match status" value="1"/>
</dbReference>
<dbReference type="FunFam" id="3.40.50.10050:FF:000001">
    <property type="entry name" value="Translation initiation factor IF-2"/>
    <property type="match status" value="1"/>
</dbReference>
<dbReference type="Gene3D" id="3.40.50.300">
    <property type="entry name" value="P-loop containing nucleotide triphosphate hydrolases"/>
    <property type="match status" value="1"/>
</dbReference>
<dbReference type="Gene3D" id="2.40.30.10">
    <property type="entry name" value="Translation factors"/>
    <property type="match status" value="2"/>
</dbReference>
<dbReference type="Gene3D" id="3.40.50.10050">
    <property type="entry name" value="Translation initiation factor IF- 2, domain 3"/>
    <property type="match status" value="1"/>
</dbReference>
<dbReference type="HAMAP" id="MF_00100_A">
    <property type="entry name" value="IF_2_A"/>
    <property type="match status" value="1"/>
</dbReference>
<dbReference type="InterPro" id="IPR004161">
    <property type="entry name" value="EFTu-like_2"/>
</dbReference>
<dbReference type="InterPro" id="IPR029459">
    <property type="entry name" value="EFTU-type"/>
</dbReference>
<dbReference type="InterPro" id="IPR027417">
    <property type="entry name" value="P-loop_NTPase"/>
</dbReference>
<dbReference type="InterPro" id="IPR005225">
    <property type="entry name" value="Small_GTP-bd"/>
</dbReference>
<dbReference type="InterPro" id="IPR000795">
    <property type="entry name" value="T_Tr_GTP-bd_dom"/>
</dbReference>
<dbReference type="InterPro" id="IPR004544">
    <property type="entry name" value="TF_aIF-2_arc"/>
</dbReference>
<dbReference type="InterPro" id="IPR015760">
    <property type="entry name" value="TIF_IF2"/>
</dbReference>
<dbReference type="InterPro" id="IPR023115">
    <property type="entry name" value="TIF_IF2_dom3"/>
</dbReference>
<dbReference type="InterPro" id="IPR036925">
    <property type="entry name" value="TIF_IF2_dom3_sf"/>
</dbReference>
<dbReference type="InterPro" id="IPR009000">
    <property type="entry name" value="Transl_B-barrel_sf"/>
</dbReference>
<dbReference type="NCBIfam" id="TIGR00491">
    <property type="entry name" value="aIF-2"/>
    <property type="match status" value="1"/>
</dbReference>
<dbReference type="NCBIfam" id="NF003078">
    <property type="entry name" value="PRK04004.1"/>
    <property type="match status" value="1"/>
</dbReference>
<dbReference type="NCBIfam" id="TIGR00231">
    <property type="entry name" value="small_GTP"/>
    <property type="match status" value="1"/>
</dbReference>
<dbReference type="PANTHER" id="PTHR43381:SF4">
    <property type="entry name" value="EUKARYOTIC TRANSLATION INITIATION FACTOR 5B"/>
    <property type="match status" value="1"/>
</dbReference>
<dbReference type="PANTHER" id="PTHR43381">
    <property type="entry name" value="TRANSLATION INITIATION FACTOR IF-2-RELATED"/>
    <property type="match status" value="1"/>
</dbReference>
<dbReference type="Pfam" id="PF00009">
    <property type="entry name" value="GTP_EFTU"/>
    <property type="match status" value="1"/>
</dbReference>
<dbReference type="Pfam" id="PF03144">
    <property type="entry name" value="GTP_EFTU_D2"/>
    <property type="match status" value="1"/>
</dbReference>
<dbReference type="Pfam" id="PF14578">
    <property type="entry name" value="GTP_EFTU_D4"/>
    <property type="match status" value="1"/>
</dbReference>
<dbReference type="Pfam" id="PF11987">
    <property type="entry name" value="IF-2"/>
    <property type="match status" value="1"/>
</dbReference>
<dbReference type="PRINTS" id="PR00315">
    <property type="entry name" value="ELONGATNFCT"/>
</dbReference>
<dbReference type="SUPFAM" id="SSF52156">
    <property type="entry name" value="Initiation factor IF2/eIF5b, domain 3"/>
    <property type="match status" value="1"/>
</dbReference>
<dbReference type="SUPFAM" id="SSF52540">
    <property type="entry name" value="P-loop containing nucleoside triphosphate hydrolases"/>
    <property type="match status" value="1"/>
</dbReference>
<dbReference type="SUPFAM" id="SSF50447">
    <property type="entry name" value="Translation proteins"/>
    <property type="match status" value="1"/>
</dbReference>
<dbReference type="PROSITE" id="PS51722">
    <property type="entry name" value="G_TR_2"/>
    <property type="match status" value="1"/>
</dbReference>
<keyword id="KW-0342">GTP-binding</keyword>
<keyword id="KW-0396">Initiation factor</keyword>
<keyword id="KW-0547">Nucleotide-binding</keyword>
<keyword id="KW-0648">Protein biosynthesis</keyword>
<keyword id="KW-1185">Reference proteome</keyword>
<evidence type="ECO:0000250" key="1"/>
<evidence type="ECO:0000255" key="2">
    <source>
        <dbReference type="HAMAP-Rule" id="MF_00100"/>
    </source>
</evidence>
<comment type="function">
    <text evidence="2">Function in general translation initiation by promoting the binding of the formylmethionine-tRNA to ribosomes. Seems to function along with eIF-2.</text>
</comment>
<comment type="similarity">
    <text evidence="2">Belongs to the TRAFAC class translation factor GTPase superfamily. Classic translation factor GTPase family. IF-2 subfamily.</text>
</comment>